<dbReference type="EC" id="1.10.3.9" evidence="1"/>
<dbReference type="EMBL" id="CP000117">
    <property type="protein sequence ID" value="ABA21206.1"/>
    <property type="molecule type" value="Genomic_DNA"/>
</dbReference>
<dbReference type="SMR" id="Q3MCT0"/>
<dbReference type="STRING" id="240292.Ava_1583"/>
<dbReference type="KEGG" id="ava:Ava_1583"/>
<dbReference type="eggNOG" id="ENOG502Z9YF">
    <property type="taxonomic scope" value="Bacteria"/>
</dbReference>
<dbReference type="HOGENOM" id="CLU_054206_1_0_3"/>
<dbReference type="Proteomes" id="UP000002533">
    <property type="component" value="Chromosome"/>
</dbReference>
<dbReference type="GO" id="GO:0009523">
    <property type="term" value="C:photosystem II"/>
    <property type="evidence" value="ECO:0007669"/>
    <property type="project" value="UniProtKB-KW"/>
</dbReference>
<dbReference type="GO" id="GO:0031676">
    <property type="term" value="C:plasma membrane-derived thylakoid membrane"/>
    <property type="evidence" value="ECO:0007669"/>
    <property type="project" value="UniProtKB-SubCell"/>
</dbReference>
<dbReference type="GO" id="GO:0016168">
    <property type="term" value="F:chlorophyll binding"/>
    <property type="evidence" value="ECO:0007669"/>
    <property type="project" value="UniProtKB-UniRule"/>
</dbReference>
<dbReference type="GO" id="GO:0045156">
    <property type="term" value="F:electron transporter, transferring electrons within the cyclic electron transport pathway of photosynthesis activity"/>
    <property type="evidence" value="ECO:0007669"/>
    <property type="project" value="InterPro"/>
</dbReference>
<dbReference type="GO" id="GO:0005506">
    <property type="term" value="F:iron ion binding"/>
    <property type="evidence" value="ECO:0007669"/>
    <property type="project" value="UniProtKB-UniRule"/>
</dbReference>
<dbReference type="GO" id="GO:0016682">
    <property type="term" value="F:oxidoreductase activity, acting on diphenols and related substances as donors, oxygen as acceptor"/>
    <property type="evidence" value="ECO:0007669"/>
    <property type="project" value="UniProtKB-UniRule"/>
</dbReference>
<dbReference type="GO" id="GO:0010242">
    <property type="term" value="F:oxygen evolving activity"/>
    <property type="evidence" value="ECO:0007669"/>
    <property type="project" value="UniProtKB-EC"/>
</dbReference>
<dbReference type="GO" id="GO:0009772">
    <property type="term" value="P:photosynthetic electron transport in photosystem II"/>
    <property type="evidence" value="ECO:0007669"/>
    <property type="project" value="InterPro"/>
</dbReference>
<dbReference type="GO" id="GO:0009635">
    <property type="term" value="P:response to herbicide"/>
    <property type="evidence" value="ECO:0007669"/>
    <property type="project" value="UniProtKB-KW"/>
</dbReference>
<dbReference type="FunFam" id="1.20.85.10:FF:000002">
    <property type="entry name" value="Photosystem II protein D1"/>
    <property type="match status" value="1"/>
</dbReference>
<dbReference type="Gene3D" id="1.20.85.10">
    <property type="entry name" value="Photosystem II protein D1-like"/>
    <property type="match status" value="2"/>
</dbReference>
<dbReference type="HAMAP" id="MF_01379">
    <property type="entry name" value="PSII_PsbA_D1"/>
    <property type="match status" value="1"/>
</dbReference>
<dbReference type="InterPro" id="IPR055266">
    <property type="entry name" value="D1/D2"/>
</dbReference>
<dbReference type="InterPro" id="IPR036854">
    <property type="entry name" value="Photo_II_D1/D2_sf"/>
</dbReference>
<dbReference type="InterPro" id="IPR000484">
    <property type="entry name" value="Photo_RC_L/M"/>
</dbReference>
<dbReference type="InterPro" id="IPR055265">
    <property type="entry name" value="Photo_RC_L/M_CS"/>
</dbReference>
<dbReference type="InterPro" id="IPR005867">
    <property type="entry name" value="PSII_D1"/>
</dbReference>
<dbReference type="NCBIfam" id="TIGR01151">
    <property type="entry name" value="psbA"/>
    <property type="match status" value="1"/>
</dbReference>
<dbReference type="PANTHER" id="PTHR33149:SF12">
    <property type="entry name" value="PHOTOSYSTEM II D2 PROTEIN"/>
    <property type="match status" value="1"/>
</dbReference>
<dbReference type="PANTHER" id="PTHR33149">
    <property type="entry name" value="PHOTOSYSTEM II PROTEIN D1"/>
    <property type="match status" value="1"/>
</dbReference>
<dbReference type="Pfam" id="PF00124">
    <property type="entry name" value="Photo_RC"/>
    <property type="match status" value="1"/>
</dbReference>
<dbReference type="PRINTS" id="PR00256">
    <property type="entry name" value="REACTNCENTRE"/>
</dbReference>
<dbReference type="SUPFAM" id="SSF81483">
    <property type="entry name" value="Bacterial photosystem II reaction centre, L and M subunits"/>
    <property type="match status" value="1"/>
</dbReference>
<dbReference type="PROSITE" id="PS00244">
    <property type="entry name" value="REACTION_CENTER"/>
    <property type="match status" value="1"/>
</dbReference>
<gene>
    <name evidence="1 2" type="primary">psbA1</name>
    <name type="ordered locus">Ava_1583</name>
</gene>
<name>PSBA1_TRIV2</name>
<accession>Q3MCT0</accession>
<feature type="chain" id="PRO_0000339924" description="Photosystem II protein D1 1">
    <location>
        <begin position="1"/>
        <end position="344"/>
    </location>
</feature>
<feature type="propeptide" id="PRO_0000339925" evidence="1">
    <location>
        <begin position="345"/>
        <end position="360"/>
    </location>
</feature>
<feature type="transmembrane region" description="Helical" evidence="1">
    <location>
        <begin position="29"/>
        <end position="46"/>
    </location>
</feature>
<feature type="transmembrane region" description="Helical" evidence="1">
    <location>
        <begin position="118"/>
        <end position="133"/>
    </location>
</feature>
<feature type="transmembrane region" description="Helical" evidence="1">
    <location>
        <begin position="142"/>
        <end position="156"/>
    </location>
</feature>
<feature type="transmembrane region" description="Helical" evidence="1">
    <location>
        <begin position="197"/>
        <end position="218"/>
    </location>
</feature>
<feature type="transmembrane region" description="Helical" evidence="1">
    <location>
        <begin position="274"/>
        <end position="288"/>
    </location>
</feature>
<feature type="binding site" description="axial binding residue" evidence="1">
    <location>
        <position position="118"/>
    </location>
    <ligand>
        <name>chlorophyll a</name>
        <dbReference type="ChEBI" id="CHEBI:58416"/>
        <label>ChlzD1</label>
    </ligand>
    <ligandPart>
        <name>Mg</name>
        <dbReference type="ChEBI" id="CHEBI:25107"/>
    </ligandPart>
</feature>
<feature type="binding site" evidence="1">
    <location>
        <position position="126"/>
    </location>
    <ligand>
        <name>pheophytin a</name>
        <dbReference type="ChEBI" id="CHEBI:136840"/>
        <label>D1</label>
    </ligand>
</feature>
<feature type="binding site" evidence="1">
    <location>
        <position position="170"/>
    </location>
    <ligand>
        <name>[CaMn4O5] cluster</name>
        <dbReference type="ChEBI" id="CHEBI:189552"/>
    </ligand>
</feature>
<feature type="binding site" evidence="1">
    <location>
        <position position="189"/>
    </location>
    <ligand>
        <name>[CaMn4O5] cluster</name>
        <dbReference type="ChEBI" id="CHEBI:189552"/>
    </ligand>
</feature>
<feature type="binding site" description="axial binding residue" evidence="1">
    <location>
        <position position="198"/>
    </location>
    <ligand>
        <name>chlorophyll a</name>
        <dbReference type="ChEBI" id="CHEBI:58416"/>
        <label>PD1</label>
    </ligand>
    <ligandPart>
        <name>Mg</name>
        <dbReference type="ChEBI" id="CHEBI:25107"/>
    </ligandPart>
</feature>
<feature type="binding site" evidence="1">
    <location>
        <position position="215"/>
    </location>
    <ligand>
        <name>a quinone</name>
        <dbReference type="ChEBI" id="CHEBI:132124"/>
        <label>B</label>
    </ligand>
</feature>
<feature type="binding site" evidence="1">
    <location>
        <position position="215"/>
    </location>
    <ligand>
        <name>Fe cation</name>
        <dbReference type="ChEBI" id="CHEBI:24875"/>
        <note>ligand shared with heterodimeric partner</note>
    </ligand>
</feature>
<feature type="binding site" evidence="1">
    <location>
        <begin position="264"/>
        <end position="265"/>
    </location>
    <ligand>
        <name>a quinone</name>
        <dbReference type="ChEBI" id="CHEBI:132124"/>
        <label>B</label>
    </ligand>
</feature>
<feature type="binding site" evidence="1">
    <location>
        <position position="272"/>
    </location>
    <ligand>
        <name>Fe cation</name>
        <dbReference type="ChEBI" id="CHEBI:24875"/>
        <note>ligand shared with heterodimeric partner</note>
    </ligand>
</feature>
<feature type="binding site" evidence="1">
    <location>
        <position position="332"/>
    </location>
    <ligand>
        <name>[CaMn4O5] cluster</name>
        <dbReference type="ChEBI" id="CHEBI:189552"/>
    </ligand>
</feature>
<feature type="binding site" evidence="1">
    <location>
        <position position="333"/>
    </location>
    <ligand>
        <name>[CaMn4O5] cluster</name>
        <dbReference type="ChEBI" id="CHEBI:189552"/>
    </ligand>
</feature>
<feature type="binding site" evidence="1">
    <location>
        <position position="342"/>
    </location>
    <ligand>
        <name>[CaMn4O5] cluster</name>
        <dbReference type="ChEBI" id="CHEBI:189552"/>
    </ligand>
</feature>
<feature type="binding site" evidence="1">
    <location>
        <position position="344"/>
    </location>
    <ligand>
        <name>[CaMn4O5] cluster</name>
        <dbReference type="ChEBI" id="CHEBI:189552"/>
    </ligand>
</feature>
<feature type="site" description="Tyrosine radical intermediate" evidence="1">
    <location>
        <position position="161"/>
    </location>
</feature>
<feature type="site" description="Stabilizes free radical intermediate" evidence="1">
    <location>
        <position position="190"/>
    </location>
</feature>
<feature type="site" description="Cleavage; by CtpA" evidence="1">
    <location>
        <begin position="344"/>
        <end position="345"/>
    </location>
</feature>
<reference key="1">
    <citation type="journal article" date="2014" name="Stand. Genomic Sci.">
        <title>Complete genome sequence of Anabaena variabilis ATCC 29413.</title>
        <authorList>
            <person name="Thiel T."/>
            <person name="Pratte B.S."/>
            <person name="Zhong J."/>
            <person name="Goodwin L."/>
            <person name="Copeland A."/>
            <person name="Lucas S."/>
            <person name="Han C."/>
            <person name="Pitluck S."/>
            <person name="Land M.L."/>
            <person name="Kyrpides N.C."/>
            <person name="Woyke T."/>
        </authorList>
    </citation>
    <scope>NUCLEOTIDE SEQUENCE [LARGE SCALE GENOMIC DNA]</scope>
    <source>
        <strain>ATCC 29413 / PCC 7937</strain>
    </source>
</reference>
<keyword id="KW-0106">Calcium</keyword>
<keyword id="KW-0148">Chlorophyll</keyword>
<keyword id="KW-0157">Chromophore</keyword>
<keyword id="KW-0249">Electron transport</keyword>
<keyword id="KW-0359">Herbicide resistance</keyword>
<keyword id="KW-0408">Iron</keyword>
<keyword id="KW-0460">Magnesium</keyword>
<keyword id="KW-0464">Manganese</keyword>
<keyword id="KW-0472">Membrane</keyword>
<keyword id="KW-0479">Metal-binding</keyword>
<keyword id="KW-0560">Oxidoreductase</keyword>
<keyword id="KW-0602">Photosynthesis</keyword>
<keyword id="KW-0604">Photosystem II</keyword>
<keyword id="KW-0793">Thylakoid</keyword>
<keyword id="KW-0812">Transmembrane</keyword>
<keyword id="KW-1133">Transmembrane helix</keyword>
<keyword id="KW-0813">Transport</keyword>
<protein>
    <recommendedName>
        <fullName evidence="1">Photosystem II protein D1 1</fullName>
        <shortName evidence="1">PSII D1 protein 1</shortName>
        <ecNumber evidence="1">1.10.3.9</ecNumber>
    </recommendedName>
    <alternativeName>
        <fullName evidence="1">Photosystem II Q(B) protein 1</fullName>
    </alternativeName>
</protein>
<proteinExistence type="inferred from homology"/>
<sequence>MTTLLEQRSSANLWHRFGNWITSTENRMYVGWFGVLLIPTALTAAIVFILAFIAAPPVDVDGIREPVSGSLLYGNNIITATVVPTSAAIGLHLYPIWEAASLDEWLYNGGPYQMIVLHFLIAIYAYMGRQWELSYRLGMRPWIPVAFSAPVAAATAVLLIYPIGQGSFSDGMMLGISGTFNFMIVFSPEHNILMHPFHMIGVAGVFGGALFSAMHGSLVTSTLVRETSEVESANTGYKFGQEEETYNIVAAHGYFGRLIFQYASFNNSRSLHFFLAAWPVIGIWFAALGISTMSFNLNGFNFNNSILDHQGRTIDTWADLLNRANLGIEVMHERNAHNFPLDLASGEVQPIALAAPAIAS</sequence>
<evidence type="ECO:0000255" key="1">
    <source>
        <dbReference type="HAMAP-Rule" id="MF_01379"/>
    </source>
</evidence>
<evidence type="ECO:0000305" key="2"/>
<comment type="function">
    <text evidence="1">Photosystem II (PSII) is a light-driven water:plastoquinone oxidoreductase that uses light energy to abstract electrons from H(2)O, generating O(2) and a proton gradient subsequently used for ATP formation. It consists of a core antenna complex that captures photons, and an electron transfer chain that converts photonic excitation into a charge separation. The D1/D2 (PsbA/PsbD) reaction center heterodimer binds P680, the primary electron donor of PSII as well as several subsequent electron acceptors.</text>
</comment>
<comment type="catalytic activity">
    <reaction evidence="1">
        <text>2 a plastoquinone + 4 hnu + 2 H2O = 2 a plastoquinol + O2</text>
        <dbReference type="Rhea" id="RHEA:36359"/>
        <dbReference type="Rhea" id="RHEA-COMP:9561"/>
        <dbReference type="Rhea" id="RHEA-COMP:9562"/>
        <dbReference type="ChEBI" id="CHEBI:15377"/>
        <dbReference type="ChEBI" id="CHEBI:15379"/>
        <dbReference type="ChEBI" id="CHEBI:17757"/>
        <dbReference type="ChEBI" id="CHEBI:30212"/>
        <dbReference type="ChEBI" id="CHEBI:62192"/>
        <dbReference type="EC" id="1.10.3.9"/>
    </reaction>
</comment>
<comment type="cofactor">
    <text evidence="1">The D1/D2 heterodimer binds P680, chlorophylls that are the primary electron donor of PSII, and subsequent electron acceptors. It shares a non-heme iron and each subunit binds pheophytin, quinone, additional chlorophylls, carotenoids and lipids. D1 provides most of the ligands for the Mn4-Ca-O5 cluster of the oxygen-evolving complex (OEC). There is also a Cl(-1) ion associated with D1 and D2, which is required for oxygen evolution. The PSII complex binds additional chlorophylls, carotenoids and specific lipids.</text>
</comment>
<comment type="subunit">
    <text evidence="1">PSII is composed of 1 copy each of membrane proteins PsbA, PsbB, PsbC, PsbD, PsbE, PsbF, PsbH, PsbI, PsbJ, PsbK, PsbL, PsbM, PsbT, PsbX, PsbY, PsbZ, Psb30/Ycf12, peripheral proteins PsbO, CyanoQ (PsbQ), PsbU, PsbV and a large number of cofactors. It forms dimeric complexes.</text>
</comment>
<comment type="subcellular location">
    <subcellularLocation>
        <location evidence="1">Cellular thylakoid membrane</location>
        <topology evidence="1">Multi-pass membrane protein</topology>
    </subcellularLocation>
</comment>
<comment type="PTM">
    <text evidence="1">Tyr-161 forms a radical intermediate that is referred to as redox-active TyrZ, YZ or Y-Z.</text>
</comment>
<comment type="PTM">
    <text evidence="1">C-terminally processed by CtpA; processing is essential to allow assembly of the oxygen-evolving complex and thus photosynthetic growth.</text>
</comment>
<comment type="miscellaneous">
    <text evidence="1">Cyanobacteria usually contain more than 2 copies of the psbA gene.</text>
</comment>
<comment type="miscellaneous">
    <text evidence="1">2 of the reaction center chlorophylls (ChlD1 and ChlD2) are entirely coordinated by water.</text>
</comment>
<comment type="miscellaneous">
    <text evidence="1">Herbicides such as atrazine, BNT, diuron or ioxynil bind in the Q(B) binding site and block subsequent electron transfer.</text>
</comment>
<comment type="similarity">
    <text evidence="1">Belongs to the reaction center PufL/M/PsbA/D family.</text>
</comment>
<organism>
    <name type="scientific">Trichormus variabilis (strain ATCC 29413 / PCC 7937)</name>
    <name type="common">Anabaena variabilis</name>
    <dbReference type="NCBI Taxonomy" id="240292"/>
    <lineage>
        <taxon>Bacteria</taxon>
        <taxon>Bacillati</taxon>
        <taxon>Cyanobacteriota</taxon>
        <taxon>Cyanophyceae</taxon>
        <taxon>Nostocales</taxon>
        <taxon>Nostocaceae</taxon>
        <taxon>Trichormus</taxon>
    </lineage>
</organism>